<accession>B9L607</accession>
<dbReference type="EMBL" id="CP001279">
    <property type="protein sequence ID" value="ACM93124.1"/>
    <property type="molecule type" value="Genomic_DNA"/>
</dbReference>
<dbReference type="RefSeq" id="WP_015902176.1">
    <property type="nucleotide sequence ID" value="NC_012115.1"/>
</dbReference>
<dbReference type="SMR" id="B9L607"/>
<dbReference type="STRING" id="598659.NAMH_1403"/>
<dbReference type="KEGG" id="nam:NAMH_1403"/>
<dbReference type="eggNOG" id="COG0261">
    <property type="taxonomic scope" value="Bacteria"/>
</dbReference>
<dbReference type="HOGENOM" id="CLU_061463_3_2_7"/>
<dbReference type="OrthoDB" id="9813334at2"/>
<dbReference type="Proteomes" id="UP000000448">
    <property type="component" value="Chromosome"/>
</dbReference>
<dbReference type="GO" id="GO:0005737">
    <property type="term" value="C:cytoplasm"/>
    <property type="evidence" value="ECO:0007669"/>
    <property type="project" value="UniProtKB-ARBA"/>
</dbReference>
<dbReference type="GO" id="GO:1990904">
    <property type="term" value="C:ribonucleoprotein complex"/>
    <property type="evidence" value="ECO:0007669"/>
    <property type="project" value="UniProtKB-KW"/>
</dbReference>
<dbReference type="GO" id="GO:0005840">
    <property type="term" value="C:ribosome"/>
    <property type="evidence" value="ECO:0007669"/>
    <property type="project" value="UniProtKB-KW"/>
</dbReference>
<dbReference type="GO" id="GO:0019843">
    <property type="term" value="F:rRNA binding"/>
    <property type="evidence" value="ECO:0007669"/>
    <property type="project" value="UniProtKB-UniRule"/>
</dbReference>
<dbReference type="GO" id="GO:0003735">
    <property type="term" value="F:structural constituent of ribosome"/>
    <property type="evidence" value="ECO:0007669"/>
    <property type="project" value="InterPro"/>
</dbReference>
<dbReference type="GO" id="GO:0006412">
    <property type="term" value="P:translation"/>
    <property type="evidence" value="ECO:0007669"/>
    <property type="project" value="UniProtKB-UniRule"/>
</dbReference>
<dbReference type="HAMAP" id="MF_01363">
    <property type="entry name" value="Ribosomal_bL21"/>
    <property type="match status" value="1"/>
</dbReference>
<dbReference type="InterPro" id="IPR028909">
    <property type="entry name" value="bL21-like"/>
</dbReference>
<dbReference type="InterPro" id="IPR036164">
    <property type="entry name" value="bL21-like_sf"/>
</dbReference>
<dbReference type="InterPro" id="IPR001787">
    <property type="entry name" value="Ribosomal_bL21"/>
</dbReference>
<dbReference type="InterPro" id="IPR018258">
    <property type="entry name" value="Ribosomal_bL21_CS"/>
</dbReference>
<dbReference type="NCBIfam" id="TIGR00061">
    <property type="entry name" value="L21"/>
    <property type="match status" value="1"/>
</dbReference>
<dbReference type="PANTHER" id="PTHR21349">
    <property type="entry name" value="50S RIBOSOMAL PROTEIN L21"/>
    <property type="match status" value="1"/>
</dbReference>
<dbReference type="PANTHER" id="PTHR21349:SF0">
    <property type="entry name" value="LARGE RIBOSOMAL SUBUNIT PROTEIN BL21M"/>
    <property type="match status" value="1"/>
</dbReference>
<dbReference type="Pfam" id="PF00829">
    <property type="entry name" value="Ribosomal_L21p"/>
    <property type="match status" value="1"/>
</dbReference>
<dbReference type="SUPFAM" id="SSF141091">
    <property type="entry name" value="L21p-like"/>
    <property type="match status" value="1"/>
</dbReference>
<dbReference type="PROSITE" id="PS01169">
    <property type="entry name" value="RIBOSOMAL_L21"/>
    <property type="match status" value="1"/>
</dbReference>
<evidence type="ECO:0000255" key="1">
    <source>
        <dbReference type="HAMAP-Rule" id="MF_01363"/>
    </source>
</evidence>
<evidence type="ECO:0000305" key="2"/>
<comment type="function">
    <text evidence="1">This protein binds to 23S rRNA in the presence of protein L20.</text>
</comment>
<comment type="subunit">
    <text evidence="1">Part of the 50S ribosomal subunit. Contacts protein L20.</text>
</comment>
<comment type="similarity">
    <text evidence="1">Belongs to the bacterial ribosomal protein bL21 family.</text>
</comment>
<keyword id="KW-0687">Ribonucleoprotein</keyword>
<keyword id="KW-0689">Ribosomal protein</keyword>
<keyword id="KW-0694">RNA-binding</keyword>
<keyword id="KW-0699">rRNA-binding</keyword>
<proteinExistence type="inferred from homology"/>
<gene>
    <name evidence="1" type="primary">rplU</name>
    <name type="ordered locus">NAMH_1403</name>
</gene>
<sequence>MYAVIKHGGKQYKVSVGDVLELDRIEGAEPKSSIELNEVLLVKGDDTKIGAPTVEGAKVVAEVINNARGKKVIIFKKRRRKDSRKKRGFRRDFTRVVIKEIVA</sequence>
<feature type="chain" id="PRO_1000166733" description="Large ribosomal subunit protein bL21">
    <location>
        <begin position="1"/>
        <end position="103"/>
    </location>
</feature>
<protein>
    <recommendedName>
        <fullName evidence="1">Large ribosomal subunit protein bL21</fullName>
    </recommendedName>
    <alternativeName>
        <fullName evidence="2">50S ribosomal protein L21</fullName>
    </alternativeName>
</protein>
<name>RL21_NAUPA</name>
<reference key="1">
    <citation type="journal article" date="2009" name="PLoS Genet.">
        <title>Adaptations to submarine hydrothermal environments exemplified by the genome of Nautilia profundicola.</title>
        <authorList>
            <person name="Campbell B.J."/>
            <person name="Smith J.L."/>
            <person name="Hanson T.E."/>
            <person name="Klotz M.G."/>
            <person name="Stein L.Y."/>
            <person name="Lee C.K."/>
            <person name="Wu D."/>
            <person name="Robinson J.M."/>
            <person name="Khouri H.M."/>
            <person name="Eisen J.A."/>
            <person name="Cary S.C."/>
        </authorList>
    </citation>
    <scope>NUCLEOTIDE SEQUENCE [LARGE SCALE GENOMIC DNA]</scope>
    <source>
        <strain>ATCC BAA-1463 / DSM 18972 / AmH</strain>
    </source>
</reference>
<organism>
    <name type="scientific">Nautilia profundicola (strain ATCC BAA-1463 / DSM 18972 / AmH)</name>
    <dbReference type="NCBI Taxonomy" id="598659"/>
    <lineage>
        <taxon>Bacteria</taxon>
        <taxon>Pseudomonadati</taxon>
        <taxon>Campylobacterota</taxon>
        <taxon>Epsilonproteobacteria</taxon>
        <taxon>Nautiliales</taxon>
        <taxon>Nautiliaceae</taxon>
        <taxon>Nautilia</taxon>
    </lineage>
</organism>